<gene>
    <name evidence="1" type="primary">gluQ</name>
    <name type="ordered locus">Sama_0779</name>
</gene>
<keyword id="KW-0030">Aminoacyl-tRNA synthetase</keyword>
<keyword id="KW-0067">ATP-binding</keyword>
<keyword id="KW-0436">Ligase</keyword>
<keyword id="KW-0479">Metal-binding</keyword>
<keyword id="KW-0547">Nucleotide-binding</keyword>
<keyword id="KW-1185">Reference proteome</keyword>
<keyword id="KW-0862">Zinc</keyword>
<comment type="function">
    <text evidence="1">Catalyzes the tRNA-independent activation of glutamate in presence of ATP and the subsequent transfer of glutamate onto a tRNA(Asp). Glutamate is transferred on the 2-amino-5-(4,5-dihydroxy-2-cyclopenten-1-yl) moiety of the queuosine in the wobble position of the QUC anticodon.</text>
</comment>
<comment type="cofactor">
    <cofactor evidence="1">
        <name>Zn(2+)</name>
        <dbReference type="ChEBI" id="CHEBI:29105"/>
    </cofactor>
    <text evidence="1">Binds 1 zinc ion per subunit.</text>
</comment>
<comment type="similarity">
    <text evidence="1">Belongs to the class-I aminoacyl-tRNA synthetase family. GluQ subfamily.</text>
</comment>
<dbReference type="EC" id="6.1.1.-" evidence="1"/>
<dbReference type="EMBL" id="CP000507">
    <property type="protein sequence ID" value="ABL98986.1"/>
    <property type="molecule type" value="Genomic_DNA"/>
</dbReference>
<dbReference type="RefSeq" id="WP_011758896.1">
    <property type="nucleotide sequence ID" value="NC_008700.1"/>
</dbReference>
<dbReference type="SMR" id="A1S3N0"/>
<dbReference type="STRING" id="326297.Sama_0779"/>
<dbReference type="KEGG" id="saz:Sama_0779"/>
<dbReference type="eggNOG" id="COG0008">
    <property type="taxonomic scope" value="Bacteria"/>
</dbReference>
<dbReference type="HOGENOM" id="CLU_015768_0_1_6"/>
<dbReference type="OrthoDB" id="9807503at2"/>
<dbReference type="Proteomes" id="UP000009175">
    <property type="component" value="Chromosome"/>
</dbReference>
<dbReference type="GO" id="GO:0005829">
    <property type="term" value="C:cytosol"/>
    <property type="evidence" value="ECO:0007669"/>
    <property type="project" value="TreeGrafter"/>
</dbReference>
<dbReference type="GO" id="GO:0005524">
    <property type="term" value="F:ATP binding"/>
    <property type="evidence" value="ECO:0007669"/>
    <property type="project" value="UniProtKB-KW"/>
</dbReference>
<dbReference type="GO" id="GO:0004818">
    <property type="term" value="F:glutamate-tRNA ligase activity"/>
    <property type="evidence" value="ECO:0007669"/>
    <property type="project" value="TreeGrafter"/>
</dbReference>
<dbReference type="GO" id="GO:0008270">
    <property type="term" value="F:zinc ion binding"/>
    <property type="evidence" value="ECO:0007669"/>
    <property type="project" value="UniProtKB-UniRule"/>
</dbReference>
<dbReference type="GO" id="GO:0006424">
    <property type="term" value="P:glutamyl-tRNA aminoacylation"/>
    <property type="evidence" value="ECO:0007669"/>
    <property type="project" value="InterPro"/>
</dbReference>
<dbReference type="GO" id="GO:0006400">
    <property type="term" value="P:tRNA modification"/>
    <property type="evidence" value="ECO:0007669"/>
    <property type="project" value="InterPro"/>
</dbReference>
<dbReference type="FunFam" id="3.40.50.620:FF:000093">
    <property type="entry name" value="Glutamyl-Q tRNA(Asp) synthetase"/>
    <property type="match status" value="1"/>
</dbReference>
<dbReference type="Gene3D" id="3.40.50.620">
    <property type="entry name" value="HUPs"/>
    <property type="match status" value="1"/>
</dbReference>
<dbReference type="HAMAP" id="MF_01428">
    <property type="entry name" value="Glu_Q_tRNA_synth"/>
    <property type="match status" value="1"/>
</dbReference>
<dbReference type="InterPro" id="IPR022380">
    <property type="entry name" value="Glu-Q_tRNA(Asp)_Synthase"/>
</dbReference>
<dbReference type="InterPro" id="IPR000924">
    <property type="entry name" value="Glu/Gln-tRNA-synth"/>
</dbReference>
<dbReference type="InterPro" id="IPR020058">
    <property type="entry name" value="Glu/Gln-tRNA-synth_Ib_cat-dom"/>
</dbReference>
<dbReference type="InterPro" id="IPR049940">
    <property type="entry name" value="GluQ/Sye"/>
</dbReference>
<dbReference type="InterPro" id="IPR014729">
    <property type="entry name" value="Rossmann-like_a/b/a_fold"/>
</dbReference>
<dbReference type="NCBIfam" id="NF004314">
    <property type="entry name" value="PRK05710.1-3"/>
    <property type="match status" value="1"/>
</dbReference>
<dbReference type="NCBIfam" id="TIGR03838">
    <property type="entry name" value="queuosine_YadB"/>
    <property type="match status" value="1"/>
</dbReference>
<dbReference type="PANTHER" id="PTHR43311">
    <property type="entry name" value="GLUTAMATE--TRNA LIGASE"/>
    <property type="match status" value="1"/>
</dbReference>
<dbReference type="PANTHER" id="PTHR43311:SF1">
    <property type="entry name" value="GLUTAMYL-Q TRNA(ASP) SYNTHETASE"/>
    <property type="match status" value="1"/>
</dbReference>
<dbReference type="Pfam" id="PF00749">
    <property type="entry name" value="tRNA-synt_1c"/>
    <property type="match status" value="1"/>
</dbReference>
<dbReference type="PRINTS" id="PR00987">
    <property type="entry name" value="TRNASYNTHGLU"/>
</dbReference>
<dbReference type="SUPFAM" id="SSF52374">
    <property type="entry name" value="Nucleotidylyl transferase"/>
    <property type="match status" value="1"/>
</dbReference>
<reference key="1">
    <citation type="submission" date="2006-12" db="EMBL/GenBank/DDBJ databases">
        <title>Complete sequence of Shewanella amazonensis SB2B.</title>
        <authorList>
            <consortium name="US DOE Joint Genome Institute"/>
            <person name="Copeland A."/>
            <person name="Lucas S."/>
            <person name="Lapidus A."/>
            <person name="Barry K."/>
            <person name="Detter J.C."/>
            <person name="Glavina del Rio T."/>
            <person name="Hammon N."/>
            <person name="Israni S."/>
            <person name="Dalin E."/>
            <person name="Tice H."/>
            <person name="Pitluck S."/>
            <person name="Munk A.C."/>
            <person name="Brettin T."/>
            <person name="Bruce D."/>
            <person name="Han C."/>
            <person name="Tapia R."/>
            <person name="Gilna P."/>
            <person name="Schmutz J."/>
            <person name="Larimer F."/>
            <person name="Land M."/>
            <person name="Hauser L."/>
            <person name="Kyrpides N."/>
            <person name="Mikhailova N."/>
            <person name="Fredrickson J."/>
            <person name="Richardson P."/>
        </authorList>
    </citation>
    <scope>NUCLEOTIDE SEQUENCE [LARGE SCALE GENOMIC DNA]</scope>
    <source>
        <strain>ATCC BAA-1098 / SB2B</strain>
    </source>
</reference>
<evidence type="ECO:0000255" key="1">
    <source>
        <dbReference type="HAMAP-Rule" id="MF_01428"/>
    </source>
</evidence>
<name>GLUQ_SHEAM</name>
<proteinExistence type="inferred from homology"/>
<accession>A1S3N0</accession>
<sequence length="290" mass="31485">MSYSPYIGRFAPSPSGSLHFGSLIAALGSFLRARSQGGQWLVRIEDIDPPREVPGAADDILRTLDAFGLHWDGKLMYQSQRTEAYQAKIDVLLASGEAYFCQCTRKQIQAIGGVYDGRCRQLGHQSGAIRIVNRARVNHFHDGLMGEVAVPDSFAAEDFIIKRSDGLYAYQLAVVMDDAKTGITEVVRGADLIEASCRQLSLFNQFGYQAPAWMHLPLACAEAGFKLSKQNHATPVDKANPLPALKAALAFLGQPIPDAHSVESLLAQAVADFSVASIPRRREILIDGGG</sequence>
<feature type="chain" id="PRO_1000024367" description="Glutamyl-Q tRNA(Asp) synthetase">
    <location>
        <begin position="1"/>
        <end position="290"/>
    </location>
</feature>
<feature type="short sequence motif" description="'HIGH' region">
    <location>
        <begin position="12"/>
        <end position="22"/>
    </location>
</feature>
<feature type="short sequence motif" description="'KMSKS' region">
    <location>
        <begin position="226"/>
        <end position="230"/>
    </location>
</feature>
<feature type="binding site" evidence="1">
    <location>
        <begin position="9"/>
        <end position="13"/>
    </location>
    <ligand>
        <name>L-glutamate</name>
        <dbReference type="ChEBI" id="CHEBI:29985"/>
    </ligand>
</feature>
<feature type="binding site" evidence="1">
    <location>
        <position position="45"/>
    </location>
    <ligand>
        <name>L-glutamate</name>
        <dbReference type="ChEBI" id="CHEBI:29985"/>
    </ligand>
</feature>
<feature type="binding site" evidence="1">
    <location>
        <position position="101"/>
    </location>
    <ligand>
        <name>Zn(2+)</name>
        <dbReference type="ChEBI" id="CHEBI:29105"/>
    </ligand>
</feature>
<feature type="binding site" evidence="1">
    <location>
        <position position="103"/>
    </location>
    <ligand>
        <name>Zn(2+)</name>
        <dbReference type="ChEBI" id="CHEBI:29105"/>
    </ligand>
</feature>
<feature type="binding site" evidence="1">
    <location>
        <position position="115"/>
    </location>
    <ligand>
        <name>Zn(2+)</name>
        <dbReference type="ChEBI" id="CHEBI:29105"/>
    </ligand>
</feature>
<feature type="binding site" evidence="1">
    <location>
        <position position="119"/>
    </location>
    <ligand>
        <name>Zn(2+)</name>
        <dbReference type="ChEBI" id="CHEBI:29105"/>
    </ligand>
</feature>
<feature type="binding site" evidence="1">
    <location>
        <position position="170"/>
    </location>
    <ligand>
        <name>L-glutamate</name>
        <dbReference type="ChEBI" id="CHEBI:29985"/>
    </ligand>
</feature>
<feature type="binding site" evidence="1">
    <location>
        <position position="188"/>
    </location>
    <ligand>
        <name>L-glutamate</name>
        <dbReference type="ChEBI" id="CHEBI:29985"/>
    </ligand>
</feature>
<feature type="binding site" evidence="1">
    <location>
        <position position="229"/>
    </location>
    <ligand>
        <name>ATP</name>
        <dbReference type="ChEBI" id="CHEBI:30616"/>
    </ligand>
</feature>
<organism>
    <name type="scientific">Shewanella amazonensis (strain ATCC BAA-1098 / SB2B)</name>
    <dbReference type="NCBI Taxonomy" id="326297"/>
    <lineage>
        <taxon>Bacteria</taxon>
        <taxon>Pseudomonadati</taxon>
        <taxon>Pseudomonadota</taxon>
        <taxon>Gammaproteobacteria</taxon>
        <taxon>Alteromonadales</taxon>
        <taxon>Shewanellaceae</taxon>
        <taxon>Shewanella</taxon>
    </lineage>
</organism>
<protein>
    <recommendedName>
        <fullName evidence="1">Glutamyl-Q tRNA(Asp) synthetase</fullName>
        <shortName evidence="1">Glu-Q-RSs</shortName>
        <ecNumber evidence="1">6.1.1.-</ecNumber>
    </recommendedName>
</protein>